<proteinExistence type="inferred from homology"/>
<protein>
    <recommendedName>
        <fullName evidence="1">tRNA uridine 5-carboxymethylaminomethyl modification enzyme MnmG</fullName>
    </recommendedName>
    <alternativeName>
        <fullName evidence="1">Glucose-inhibited division protein A</fullName>
    </alternativeName>
</protein>
<name>MNMG_CITK8</name>
<accession>A8ACP7</accession>
<dbReference type="EMBL" id="CP000822">
    <property type="protein sequence ID" value="ABV11260.1"/>
    <property type="molecule type" value="Genomic_DNA"/>
</dbReference>
<dbReference type="RefSeq" id="WP_012131098.1">
    <property type="nucleotide sequence ID" value="NC_009792.1"/>
</dbReference>
<dbReference type="SMR" id="A8ACP7"/>
<dbReference type="STRING" id="290338.CKO_00081"/>
<dbReference type="GeneID" id="45134382"/>
<dbReference type="KEGG" id="cko:CKO_00081"/>
<dbReference type="HOGENOM" id="CLU_007831_2_2_6"/>
<dbReference type="OrthoDB" id="9815560at2"/>
<dbReference type="Proteomes" id="UP000008148">
    <property type="component" value="Chromosome"/>
</dbReference>
<dbReference type="GO" id="GO:0005829">
    <property type="term" value="C:cytosol"/>
    <property type="evidence" value="ECO:0007669"/>
    <property type="project" value="TreeGrafter"/>
</dbReference>
<dbReference type="GO" id="GO:0050660">
    <property type="term" value="F:flavin adenine dinucleotide binding"/>
    <property type="evidence" value="ECO:0007669"/>
    <property type="project" value="UniProtKB-UniRule"/>
</dbReference>
<dbReference type="GO" id="GO:0030488">
    <property type="term" value="P:tRNA methylation"/>
    <property type="evidence" value="ECO:0007669"/>
    <property type="project" value="TreeGrafter"/>
</dbReference>
<dbReference type="GO" id="GO:0002098">
    <property type="term" value="P:tRNA wobble uridine modification"/>
    <property type="evidence" value="ECO:0007669"/>
    <property type="project" value="InterPro"/>
</dbReference>
<dbReference type="FunFam" id="1.10.10.1800:FF:000001">
    <property type="entry name" value="tRNA uridine 5-carboxymethylaminomethyl modification enzyme MnmG"/>
    <property type="match status" value="1"/>
</dbReference>
<dbReference type="FunFam" id="1.10.150.570:FF:000001">
    <property type="entry name" value="tRNA uridine 5-carboxymethylaminomethyl modification enzyme MnmG"/>
    <property type="match status" value="1"/>
</dbReference>
<dbReference type="FunFam" id="3.50.50.60:FF:000002">
    <property type="entry name" value="tRNA uridine 5-carboxymethylaminomethyl modification enzyme MnmG"/>
    <property type="match status" value="1"/>
</dbReference>
<dbReference type="FunFam" id="3.50.50.60:FF:000010">
    <property type="entry name" value="tRNA uridine 5-carboxymethylaminomethyl modification enzyme MnmG"/>
    <property type="match status" value="1"/>
</dbReference>
<dbReference type="Gene3D" id="3.50.50.60">
    <property type="entry name" value="FAD/NAD(P)-binding domain"/>
    <property type="match status" value="2"/>
</dbReference>
<dbReference type="Gene3D" id="1.10.150.570">
    <property type="entry name" value="GidA associated domain, C-terminal subdomain"/>
    <property type="match status" value="1"/>
</dbReference>
<dbReference type="Gene3D" id="1.10.10.1800">
    <property type="entry name" value="tRNA uridine 5-carboxymethylaminomethyl modification enzyme MnmG/GidA"/>
    <property type="match status" value="1"/>
</dbReference>
<dbReference type="HAMAP" id="MF_00129">
    <property type="entry name" value="MnmG_GidA"/>
    <property type="match status" value="1"/>
</dbReference>
<dbReference type="InterPro" id="IPR036188">
    <property type="entry name" value="FAD/NAD-bd_sf"/>
</dbReference>
<dbReference type="InterPro" id="IPR049312">
    <property type="entry name" value="GIDA_C_N"/>
</dbReference>
<dbReference type="InterPro" id="IPR004416">
    <property type="entry name" value="MnmG"/>
</dbReference>
<dbReference type="InterPro" id="IPR002218">
    <property type="entry name" value="MnmG-rel"/>
</dbReference>
<dbReference type="InterPro" id="IPR020595">
    <property type="entry name" value="MnmG-rel_CS"/>
</dbReference>
<dbReference type="InterPro" id="IPR026904">
    <property type="entry name" value="MnmG_C"/>
</dbReference>
<dbReference type="InterPro" id="IPR047001">
    <property type="entry name" value="MnmG_C_subdom"/>
</dbReference>
<dbReference type="InterPro" id="IPR044920">
    <property type="entry name" value="MnmG_C_subdom_sf"/>
</dbReference>
<dbReference type="InterPro" id="IPR040131">
    <property type="entry name" value="MnmG_N"/>
</dbReference>
<dbReference type="NCBIfam" id="TIGR00136">
    <property type="entry name" value="mnmG_gidA"/>
    <property type="match status" value="1"/>
</dbReference>
<dbReference type="PANTHER" id="PTHR11806">
    <property type="entry name" value="GLUCOSE INHIBITED DIVISION PROTEIN A"/>
    <property type="match status" value="1"/>
</dbReference>
<dbReference type="PANTHER" id="PTHR11806:SF0">
    <property type="entry name" value="PROTEIN MTO1 HOMOLOG, MITOCHONDRIAL"/>
    <property type="match status" value="1"/>
</dbReference>
<dbReference type="Pfam" id="PF01134">
    <property type="entry name" value="GIDA"/>
    <property type="match status" value="1"/>
</dbReference>
<dbReference type="Pfam" id="PF21680">
    <property type="entry name" value="GIDA_C_1st"/>
    <property type="match status" value="1"/>
</dbReference>
<dbReference type="Pfam" id="PF13932">
    <property type="entry name" value="SAM_GIDA_C"/>
    <property type="match status" value="1"/>
</dbReference>
<dbReference type="SMART" id="SM01228">
    <property type="entry name" value="GIDA_assoc_3"/>
    <property type="match status" value="1"/>
</dbReference>
<dbReference type="SUPFAM" id="SSF51905">
    <property type="entry name" value="FAD/NAD(P)-binding domain"/>
    <property type="match status" value="1"/>
</dbReference>
<dbReference type="PROSITE" id="PS01280">
    <property type="entry name" value="GIDA_1"/>
    <property type="match status" value="1"/>
</dbReference>
<dbReference type="PROSITE" id="PS01281">
    <property type="entry name" value="GIDA_2"/>
    <property type="match status" value="1"/>
</dbReference>
<reference key="1">
    <citation type="submission" date="2007-08" db="EMBL/GenBank/DDBJ databases">
        <authorList>
            <consortium name="The Citrobacter koseri Genome Sequencing Project"/>
            <person name="McClelland M."/>
            <person name="Sanderson E.K."/>
            <person name="Porwollik S."/>
            <person name="Spieth J."/>
            <person name="Clifton W.S."/>
            <person name="Latreille P."/>
            <person name="Courtney L."/>
            <person name="Wang C."/>
            <person name="Pepin K."/>
            <person name="Bhonagiri V."/>
            <person name="Nash W."/>
            <person name="Johnson M."/>
            <person name="Thiruvilangam P."/>
            <person name="Wilson R."/>
        </authorList>
    </citation>
    <scope>NUCLEOTIDE SEQUENCE [LARGE SCALE GENOMIC DNA]</scope>
    <source>
        <strain>ATCC BAA-895 / CDC 4225-83 / SGSC4696</strain>
    </source>
</reference>
<keyword id="KW-0963">Cytoplasm</keyword>
<keyword id="KW-0274">FAD</keyword>
<keyword id="KW-0285">Flavoprotein</keyword>
<keyword id="KW-0520">NAD</keyword>
<keyword id="KW-1185">Reference proteome</keyword>
<keyword id="KW-0819">tRNA processing</keyword>
<feature type="chain" id="PRO_1000016580" description="tRNA uridine 5-carboxymethylaminomethyl modification enzyme MnmG">
    <location>
        <begin position="1"/>
        <end position="629"/>
    </location>
</feature>
<feature type="binding site" evidence="1">
    <location>
        <begin position="13"/>
        <end position="18"/>
    </location>
    <ligand>
        <name>FAD</name>
        <dbReference type="ChEBI" id="CHEBI:57692"/>
    </ligand>
</feature>
<feature type="binding site" evidence="1">
    <location>
        <position position="125"/>
    </location>
    <ligand>
        <name>FAD</name>
        <dbReference type="ChEBI" id="CHEBI:57692"/>
    </ligand>
</feature>
<feature type="binding site" evidence="1">
    <location>
        <position position="180"/>
    </location>
    <ligand>
        <name>FAD</name>
        <dbReference type="ChEBI" id="CHEBI:57692"/>
    </ligand>
</feature>
<feature type="binding site" evidence="1">
    <location>
        <begin position="273"/>
        <end position="287"/>
    </location>
    <ligand>
        <name>NAD(+)</name>
        <dbReference type="ChEBI" id="CHEBI:57540"/>
    </ligand>
</feature>
<feature type="binding site" evidence="1">
    <location>
        <position position="370"/>
    </location>
    <ligand>
        <name>FAD</name>
        <dbReference type="ChEBI" id="CHEBI:57692"/>
    </ligand>
</feature>
<comment type="function">
    <text evidence="1">NAD-binding protein involved in the addition of a carboxymethylaminomethyl (cmnm) group at the wobble position (U34) of certain tRNAs, forming tRNA-cmnm(5)s(2)U34.</text>
</comment>
<comment type="cofactor">
    <cofactor evidence="1">
        <name>FAD</name>
        <dbReference type="ChEBI" id="CHEBI:57692"/>
    </cofactor>
</comment>
<comment type="subunit">
    <text evidence="1">Homodimer. Heterotetramer of two MnmE and two MnmG subunits.</text>
</comment>
<comment type="subcellular location">
    <subcellularLocation>
        <location evidence="1">Cytoplasm</location>
    </subcellularLocation>
</comment>
<comment type="similarity">
    <text evidence="1">Belongs to the MnmG family.</text>
</comment>
<organism>
    <name type="scientific">Citrobacter koseri (strain ATCC BAA-895 / CDC 4225-83 / SGSC4696)</name>
    <dbReference type="NCBI Taxonomy" id="290338"/>
    <lineage>
        <taxon>Bacteria</taxon>
        <taxon>Pseudomonadati</taxon>
        <taxon>Pseudomonadota</taxon>
        <taxon>Gammaproteobacteria</taxon>
        <taxon>Enterobacterales</taxon>
        <taxon>Enterobacteriaceae</taxon>
        <taxon>Citrobacter</taxon>
    </lineage>
</organism>
<gene>
    <name evidence="1" type="primary">mnmG</name>
    <name evidence="1" type="synonym">gidA</name>
    <name type="ordered locus">CKO_00081</name>
</gene>
<sequence length="629" mass="69540">MFYPDPFDVIIIGGGHAGTEAAMAAARMGQQTLLLTHNIDTLGQMSCNPAIGGIGKGHLVKEVDALGGLMAKAIDQAGIQFRILNASKGPAVRATRAQADRVLYRQAVRTALENQPNLMIFQQAVEDLIVENDRVVGAVTQMGLKFRAKAVVLTVGTFLDGKIHIGLDNYSSGRAGDPPSIPLSRRLRELPLRVSRLKTGTPPRIDARTIDFSVLAQQHGDNPMPVFSFMGNASQHPQQVPCYITHTNEKTHDVIRNNLDRSPMYAGVIEGIGPRYCPSIEDKVMRFADRNQHQIFLEPEGLTSNEIYPNGISTSLPFDVQMQIVRSMQGMENAKIVRPGYAIEYDFFDPRDLKPTLESKFIQGLFFAGQINGTTGYEEAAAQGLLAGLNAARLSADKEGWAPARSQAYLGVLVDDLCTLGTKEPYRMFTSRAEYRLMLREDNADLRLTEMGRELGLVDDERWARFNEKLENIERERQRLKSTWVTPSAESAGEVNAHLTAPLSREASGEDLLRRPEMTYAQLTSLTPFAPGLDDAQAAEQVEIQVKYEGYIARQQDEIEKQLRNENTLLPATLDYRQVSGLSNEVIAKLNDHKPVSIGQASRISGVTPAAISILLVWLKKQGMLRRSA</sequence>
<evidence type="ECO:0000255" key="1">
    <source>
        <dbReference type="HAMAP-Rule" id="MF_00129"/>
    </source>
</evidence>